<accession>Q8TIP4</accession>
<proteinExistence type="inferred from homology"/>
<keyword id="KW-0460">Magnesium</keyword>
<keyword id="KW-0479">Metal-binding</keyword>
<keyword id="KW-1185">Reference proteome</keyword>
<gene>
    <name type="ordered locus">MA_4098</name>
</gene>
<evidence type="ECO:0000255" key="1">
    <source>
        <dbReference type="HAMAP-Rule" id="MF_01095"/>
    </source>
</evidence>
<protein>
    <recommendedName>
        <fullName evidence="1">UPF0292 protein MA_4098</fullName>
    </recommendedName>
</protein>
<dbReference type="EMBL" id="AE010299">
    <property type="protein sequence ID" value="AAM07446.1"/>
    <property type="molecule type" value="Genomic_DNA"/>
</dbReference>
<dbReference type="RefSeq" id="WP_011023990.1">
    <property type="nucleotide sequence ID" value="NC_003552.1"/>
</dbReference>
<dbReference type="SMR" id="Q8TIP4"/>
<dbReference type="STRING" id="188937.MA_4098"/>
<dbReference type="EnsemblBacteria" id="AAM07446">
    <property type="protein sequence ID" value="AAM07446"/>
    <property type="gene ID" value="MA_4098"/>
</dbReference>
<dbReference type="GeneID" id="1475992"/>
<dbReference type="KEGG" id="mac:MA_4098"/>
<dbReference type="HOGENOM" id="CLU_140789_0_0_2"/>
<dbReference type="InParanoid" id="Q8TIP4"/>
<dbReference type="OrthoDB" id="56459at2157"/>
<dbReference type="PhylomeDB" id="Q8TIP4"/>
<dbReference type="Proteomes" id="UP000002487">
    <property type="component" value="Chromosome"/>
</dbReference>
<dbReference type="GO" id="GO:0046872">
    <property type="term" value="F:metal ion binding"/>
    <property type="evidence" value="ECO:0007669"/>
    <property type="project" value="UniProtKB-KW"/>
</dbReference>
<dbReference type="CDD" id="cd01027">
    <property type="entry name" value="TOPRIM_RNase_M5_like"/>
    <property type="match status" value="1"/>
</dbReference>
<dbReference type="Gene3D" id="3.40.1360.10">
    <property type="match status" value="1"/>
</dbReference>
<dbReference type="HAMAP" id="MF_01095">
    <property type="entry name" value="UPF0292"/>
    <property type="match status" value="1"/>
</dbReference>
<dbReference type="InterPro" id="IPR006171">
    <property type="entry name" value="TOPRIM_dom"/>
</dbReference>
<dbReference type="InterPro" id="IPR034141">
    <property type="entry name" value="TOPRIM_RNase_M5-like"/>
</dbReference>
<dbReference type="InterPro" id="IPR022972">
    <property type="entry name" value="UPF0292"/>
</dbReference>
<dbReference type="NCBIfam" id="NF003091">
    <property type="entry name" value="PRK04017.1-2"/>
    <property type="match status" value="1"/>
</dbReference>
<dbReference type="PANTHER" id="PTHR39964:SF2">
    <property type="entry name" value="UPF0292 PROTEIN MJ1624"/>
    <property type="match status" value="1"/>
</dbReference>
<dbReference type="PANTHER" id="PTHR39964">
    <property type="entry name" value="UPF0292 PROTEIN TK1411"/>
    <property type="match status" value="1"/>
</dbReference>
<dbReference type="Pfam" id="PF01751">
    <property type="entry name" value="Toprim"/>
    <property type="match status" value="1"/>
</dbReference>
<dbReference type="SMART" id="SM00493">
    <property type="entry name" value="TOPRIM"/>
    <property type="match status" value="1"/>
</dbReference>
<dbReference type="SUPFAM" id="SSF110455">
    <property type="entry name" value="Toprim domain"/>
    <property type="match status" value="1"/>
</dbReference>
<dbReference type="PROSITE" id="PS50880">
    <property type="entry name" value="TOPRIM"/>
    <property type="match status" value="1"/>
</dbReference>
<comment type="cofactor">
    <cofactor evidence="1">
        <name>Mg(2+)</name>
        <dbReference type="ChEBI" id="CHEBI:18420"/>
    </cofactor>
    <text evidence="1">Binds two Mg(2+) per subunit.</text>
</comment>
<comment type="similarity">
    <text evidence="1">Belongs to the UPF0292 family.</text>
</comment>
<sequence length="144" mass="16789">MTDIEIYRKRLERIEELLLELSEYSKKGAVIIVEGKRDILSMKRLGIDGNFELATRHSLFNFSERIAKLGCEVIILTDWDRRGDILATKLSEYFGNFGIKPELQIRNKLRLITQKEIKDVESLYTYVSKLRSKTGVSFDQEDNI</sequence>
<reference key="1">
    <citation type="journal article" date="2002" name="Genome Res.">
        <title>The genome of Methanosarcina acetivorans reveals extensive metabolic and physiological diversity.</title>
        <authorList>
            <person name="Galagan J.E."/>
            <person name="Nusbaum C."/>
            <person name="Roy A."/>
            <person name="Endrizzi M.G."/>
            <person name="Macdonald P."/>
            <person name="FitzHugh W."/>
            <person name="Calvo S."/>
            <person name="Engels R."/>
            <person name="Smirnov S."/>
            <person name="Atnoor D."/>
            <person name="Brown A."/>
            <person name="Allen N."/>
            <person name="Naylor J."/>
            <person name="Stange-Thomann N."/>
            <person name="DeArellano K."/>
            <person name="Johnson R."/>
            <person name="Linton L."/>
            <person name="McEwan P."/>
            <person name="McKernan K."/>
            <person name="Talamas J."/>
            <person name="Tirrell A."/>
            <person name="Ye W."/>
            <person name="Zimmer A."/>
            <person name="Barber R.D."/>
            <person name="Cann I."/>
            <person name="Graham D.E."/>
            <person name="Grahame D.A."/>
            <person name="Guss A.M."/>
            <person name="Hedderich R."/>
            <person name="Ingram-Smith C."/>
            <person name="Kuettner H.C."/>
            <person name="Krzycki J.A."/>
            <person name="Leigh J.A."/>
            <person name="Li W."/>
            <person name="Liu J."/>
            <person name="Mukhopadhyay B."/>
            <person name="Reeve J.N."/>
            <person name="Smith K."/>
            <person name="Springer T.A."/>
            <person name="Umayam L.A."/>
            <person name="White O."/>
            <person name="White R.H."/>
            <person name="de Macario E.C."/>
            <person name="Ferry J.G."/>
            <person name="Jarrell K.F."/>
            <person name="Jing H."/>
            <person name="Macario A.J.L."/>
            <person name="Paulsen I.T."/>
            <person name="Pritchett M."/>
            <person name="Sowers K.R."/>
            <person name="Swanson R.V."/>
            <person name="Zinder S.H."/>
            <person name="Lander E."/>
            <person name="Metcalf W.W."/>
            <person name="Birren B."/>
        </authorList>
    </citation>
    <scope>NUCLEOTIDE SEQUENCE [LARGE SCALE GENOMIC DNA]</scope>
    <source>
        <strain>ATCC 35395 / DSM 2834 / JCM 12185 / C2A</strain>
    </source>
</reference>
<organism>
    <name type="scientific">Methanosarcina acetivorans (strain ATCC 35395 / DSM 2834 / JCM 12185 / C2A)</name>
    <dbReference type="NCBI Taxonomy" id="188937"/>
    <lineage>
        <taxon>Archaea</taxon>
        <taxon>Methanobacteriati</taxon>
        <taxon>Methanobacteriota</taxon>
        <taxon>Stenosarchaea group</taxon>
        <taxon>Methanomicrobia</taxon>
        <taxon>Methanosarcinales</taxon>
        <taxon>Methanosarcinaceae</taxon>
        <taxon>Methanosarcina</taxon>
    </lineage>
</organism>
<feature type="chain" id="PRO_0000143950" description="UPF0292 protein MA_4098">
    <location>
        <begin position="1"/>
        <end position="144"/>
    </location>
</feature>
<feature type="domain" description="Toprim" evidence="1">
    <location>
        <begin position="28"/>
        <end position="109"/>
    </location>
</feature>
<feature type="binding site" evidence="1">
    <location>
        <position position="34"/>
    </location>
    <ligand>
        <name>Mg(2+)</name>
        <dbReference type="ChEBI" id="CHEBI:18420"/>
        <label>1</label>
        <note>catalytic</note>
    </ligand>
</feature>
<feature type="binding site" evidence="1">
    <location>
        <position position="78"/>
    </location>
    <ligand>
        <name>Mg(2+)</name>
        <dbReference type="ChEBI" id="CHEBI:18420"/>
        <label>1</label>
        <note>catalytic</note>
    </ligand>
</feature>
<feature type="binding site" evidence="1">
    <location>
        <position position="78"/>
    </location>
    <ligand>
        <name>Mg(2+)</name>
        <dbReference type="ChEBI" id="CHEBI:18420"/>
        <label>2</label>
    </ligand>
</feature>
<feature type="binding site" evidence="1">
    <location>
        <position position="80"/>
    </location>
    <ligand>
        <name>Mg(2+)</name>
        <dbReference type="ChEBI" id="CHEBI:18420"/>
        <label>2</label>
    </ligand>
</feature>
<name>Y4098_METAC</name>